<protein>
    <recommendedName>
        <fullName evidence="1">Regulatory protein RecX</fullName>
    </recommendedName>
</protein>
<dbReference type="EMBL" id="AE017194">
    <property type="protein sequence ID" value="AAS39506.1"/>
    <property type="molecule type" value="Genomic_DNA"/>
</dbReference>
<dbReference type="SMR" id="Q73DY9"/>
<dbReference type="KEGG" id="bca:BCE_0571"/>
<dbReference type="HOGENOM" id="CLU_066607_4_0_9"/>
<dbReference type="Proteomes" id="UP000002527">
    <property type="component" value="Chromosome"/>
</dbReference>
<dbReference type="GO" id="GO:0005737">
    <property type="term" value="C:cytoplasm"/>
    <property type="evidence" value="ECO:0007669"/>
    <property type="project" value="UniProtKB-SubCell"/>
</dbReference>
<dbReference type="GO" id="GO:0006282">
    <property type="term" value="P:regulation of DNA repair"/>
    <property type="evidence" value="ECO:0007669"/>
    <property type="project" value="UniProtKB-UniRule"/>
</dbReference>
<dbReference type="Gene3D" id="1.10.10.10">
    <property type="entry name" value="Winged helix-like DNA-binding domain superfamily/Winged helix DNA-binding domain"/>
    <property type="match status" value="4"/>
</dbReference>
<dbReference type="HAMAP" id="MF_01114">
    <property type="entry name" value="RecX"/>
    <property type="match status" value="1"/>
</dbReference>
<dbReference type="InterPro" id="IPR053926">
    <property type="entry name" value="RecX_HTH_1st"/>
</dbReference>
<dbReference type="InterPro" id="IPR053924">
    <property type="entry name" value="RecX_HTH_2nd"/>
</dbReference>
<dbReference type="InterPro" id="IPR053925">
    <property type="entry name" value="RecX_HTH_3rd"/>
</dbReference>
<dbReference type="InterPro" id="IPR003783">
    <property type="entry name" value="Regulatory_RecX"/>
</dbReference>
<dbReference type="InterPro" id="IPR036388">
    <property type="entry name" value="WH-like_DNA-bd_sf"/>
</dbReference>
<dbReference type="NCBIfam" id="NF010733">
    <property type="entry name" value="PRK14135.1"/>
    <property type="match status" value="1"/>
</dbReference>
<dbReference type="PANTHER" id="PTHR33602">
    <property type="entry name" value="REGULATORY PROTEIN RECX FAMILY PROTEIN"/>
    <property type="match status" value="1"/>
</dbReference>
<dbReference type="PANTHER" id="PTHR33602:SF1">
    <property type="entry name" value="REGULATORY PROTEIN RECX FAMILY PROTEIN"/>
    <property type="match status" value="1"/>
</dbReference>
<dbReference type="Pfam" id="PF21982">
    <property type="entry name" value="RecX_HTH1"/>
    <property type="match status" value="1"/>
</dbReference>
<dbReference type="Pfam" id="PF02631">
    <property type="entry name" value="RecX_HTH2"/>
    <property type="match status" value="1"/>
</dbReference>
<dbReference type="Pfam" id="PF21981">
    <property type="entry name" value="RecX_HTH3"/>
    <property type="match status" value="2"/>
</dbReference>
<sequence>MAVITKIEVQKRSKERFNIYIDKGQGEEYGFSVNEVILIKHGLQKGLEIDEIALGNILYNEEVQKAYLQAISYLSYQMRTKLEIEDFLRKKEVGQAIISEVVSKLLHDRYINDKEYAILYTRTQSNVNRKGPTVIKRELLNKGVQDLIITHSLQEYPKEKQIENALILIEKKKKSYQKHSFLQMKLKLDEMLVRKGYSRDVIQICLEELKDEKDDEKQQEALHYHGNKYYEKYKKYDGWTFENKMKQALYRKGFSIDEIEIFLQMKREEG</sequence>
<evidence type="ECO:0000255" key="1">
    <source>
        <dbReference type="HAMAP-Rule" id="MF_01114"/>
    </source>
</evidence>
<name>RECX_BACC1</name>
<organism>
    <name type="scientific">Bacillus cereus (strain ATCC 10987 / NRS 248)</name>
    <dbReference type="NCBI Taxonomy" id="222523"/>
    <lineage>
        <taxon>Bacteria</taxon>
        <taxon>Bacillati</taxon>
        <taxon>Bacillota</taxon>
        <taxon>Bacilli</taxon>
        <taxon>Bacillales</taxon>
        <taxon>Bacillaceae</taxon>
        <taxon>Bacillus</taxon>
        <taxon>Bacillus cereus group</taxon>
    </lineage>
</organism>
<reference key="1">
    <citation type="journal article" date="2004" name="Nucleic Acids Res.">
        <title>The genome sequence of Bacillus cereus ATCC 10987 reveals metabolic adaptations and a large plasmid related to Bacillus anthracis pXO1.</title>
        <authorList>
            <person name="Rasko D.A."/>
            <person name="Ravel J."/>
            <person name="Oekstad O.A."/>
            <person name="Helgason E."/>
            <person name="Cer R.Z."/>
            <person name="Jiang L."/>
            <person name="Shores K.A."/>
            <person name="Fouts D.E."/>
            <person name="Tourasse N.J."/>
            <person name="Angiuoli S.V."/>
            <person name="Kolonay J.F."/>
            <person name="Nelson W.C."/>
            <person name="Kolstoe A.-B."/>
            <person name="Fraser C.M."/>
            <person name="Read T.D."/>
        </authorList>
    </citation>
    <scope>NUCLEOTIDE SEQUENCE [LARGE SCALE GENOMIC DNA]</scope>
    <source>
        <strain>ATCC 10987 / NRS 248</strain>
    </source>
</reference>
<feature type="chain" id="PRO_0000162415" description="Regulatory protein RecX">
    <location>
        <begin position="1"/>
        <end position="270"/>
    </location>
</feature>
<keyword id="KW-0963">Cytoplasm</keyword>
<comment type="function">
    <text evidence="1">Modulates RecA activity.</text>
</comment>
<comment type="subcellular location">
    <subcellularLocation>
        <location evidence="1">Cytoplasm</location>
    </subcellularLocation>
</comment>
<comment type="similarity">
    <text evidence="1">Belongs to the RecX family.</text>
</comment>
<gene>
    <name evidence="1" type="primary">recX</name>
    <name type="ordered locus">BCE_0571</name>
</gene>
<accession>Q73DY9</accession>
<proteinExistence type="inferred from homology"/>